<accession>A8M2W8</accession>
<sequence length="322" mass="33598">MREIDVAVIGAGPSGLFAAYYAGFRGLSVAVVDALPEPGGQVTAMYPEKLIHDVAGFPAIRGRDLIANLVAQAAPFDPRYLLGTRAEKLTYVDGRPVLGLAGGEQLACGAVVITGGLGSFTPRPLPVAERFLGTGIVYFVPQPADLTNRDVLIVGGGDSAFDWASTLQPLARSVTLVHRRERFRAHAATVARVRALPVRIVVNAEVTRLHGGGTVTGAEITVRGGAAELLPVDTVVAALGFTADLGPLTEWGLRLDRRHIVVDSTMATNLPRVFAAGDITEYPGKVRLIATGFGEAATAVNNAAVVIDPAAHLFPGHSSDGS</sequence>
<keyword id="KW-0274">FAD</keyword>
<keyword id="KW-0285">Flavoprotein</keyword>
<keyword id="KW-0521">NADP</keyword>
<keyword id="KW-0560">Oxidoreductase</keyword>
<feature type="chain" id="PRO_0000364932" description="Ferredoxin--NADP reductase">
    <location>
        <begin position="1"/>
        <end position="322"/>
    </location>
</feature>
<feature type="binding site" evidence="1">
    <location>
        <position position="14"/>
    </location>
    <ligand>
        <name>FAD</name>
        <dbReference type="ChEBI" id="CHEBI:57692"/>
    </ligand>
</feature>
<feature type="binding site" evidence="1">
    <location>
        <position position="33"/>
    </location>
    <ligand>
        <name>FAD</name>
        <dbReference type="ChEBI" id="CHEBI:57692"/>
    </ligand>
</feature>
<feature type="binding site" evidence="1">
    <location>
        <position position="41"/>
    </location>
    <ligand>
        <name>FAD</name>
        <dbReference type="ChEBI" id="CHEBI:57692"/>
    </ligand>
</feature>
<feature type="binding site" evidence="1">
    <location>
        <position position="46"/>
    </location>
    <ligand>
        <name>FAD</name>
        <dbReference type="ChEBI" id="CHEBI:57692"/>
    </ligand>
</feature>
<feature type="binding site" evidence="1">
    <location>
        <position position="86"/>
    </location>
    <ligand>
        <name>FAD</name>
        <dbReference type="ChEBI" id="CHEBI:57692"/>
    </ligand>
</feature>
<feature type="binding site" evidence="1">
    <location>
        <position position="120"/>
    </location>
    <ligand>
        <name>FAD</name>
        <dbReference type="ChEBI" id="CHEBI:57692"/>
    </ligand>
</feature>
<feature type="binding site" evidence="1">
    <location>
        <position position="278"/>
    </location>
    <ligand>
        <name>FAD</name>
        <dbReference type="ChEBI" id="CHEBI:57692"/>
    </ligand>
</feature>
<feature type="binding site" evidence="1">
    <location>
        <position position="319"/>
    </location>
    <ligand>
        <name>FAD</name>
        <dbReference type="ChEBI" id="CHEBI:57692"/>
    </ligand>
</feature>
<protein>
    <recommendedName>
        <fullName evidence="1">Ferredoxin--NADP reductase</fullName>
        <shortName evidence="1">FNR</shortName>
        <shortName evidence="1">Fd-NADP(+) reductase</shortName>
        <ecNumber evidence="1">1.18.1.2</ecNumber>
    </recommendedName>
</protein>
<evidence type="ECO:0000255" key="1">
    <source>
        <dbReference type="HAMAP-Rule" id="MF_01685"/>
    </source>
</evidence>
<dbReference type="EC" id="1.18.1.2" evidence="1"/>
<dbReference type="EMBL" id="CP000850">
    <property type="protein sequence ID" value="ABV96736.1"/>
    <property type="molecule type" value="Genomic_DNA"/>
</dbReference>
<dbReference type="SMR" id="A8M2W8"/>
<dbReference type="STRING" id="391037.Sare_0817"/>
<dbReference type="KEGG" id="saq:Sare_0817"/>
<dbReference type="PATRIC" id="fig|391037.6.peg.834"/>
<dbReference type="eggNOG" id="COG0492">
    <property type="taxonomic scope" value="Bacteria"/>
</dbReference>
<dbReference type="HOGENOM" id="CLU_031864_5_5_11"/>
<dbReference type="OrthoDB" id="9806179at2"/>
<dbReference type="GO" id="GO:0004324">
    <property type="term" value="F:ferredoxin-NADP+ reductase activity"/>
    <property type="evidence" value="ECO:0007669"/>
    <property type="project" value="UniProtKB-UniRule"/>
</dbReference>
<dbReference type="GO" id="GO:0050660">
    <property type="term" value="F:flavin adenine dinucleotide binding"/>
    <property type="evidence" value="ECO:0007669"/>
    <property type="project" value="UniProtKB-UniRule"/>
</dbReference>
<dbReference type="GO" id="GO:0050661">
    <property type="term" value="F:NADP binding"/>
    <property type="evidence" value="ECO:0007669"/>
    <property type="project" value="UniProtKB-UniRule"/>
</dbReference>
<dbReference type="Gene3D" id="3.50.50.60">
    <property type="entry name" value="FAD/NAD(P)-binding domain"/>
    <property type="match status" value="2"/>
</dbReference>
<dbReference type="HAMAP" id="MF_01685">
    <property type="entry name" value="FENR2"/>
    <property type="match status" value="1"/>
</dbReference>
<dbReference type="InterPro" id="IPR036188">
    <property type="entry name" value="FAD/NAD-bd_sf"/>
</dbReference>
<dbReference type="InterPro" id="IPR023753">
    <property type="entry name" value="FAD/NAD-binding_dom"/>
</dbReference>
<dbReference type="InterPro" id="IPR022890">
    <property type="entry name" value="Fd--NADP_Rdtase_type_2"/>
</dbReference>
<dbReference type="InterPro" id="IPR050097">
    <property type="entry name" value="Ferredoxin-NADP_redctase_2"/>
</dbReference>
<dbReference type="PANTHER" id="PTHR48105">
    <property type="entry name" value="THIOREDOXIN REDUCTASE 1-RELATED-RELATED"/>
    <property type="match status" value="1"/>
</dbReference>
<dbReference type="Pfam" id="PF07992">
    <property type="entry name" value="Pyr_redox_2"/>
    <property type="match status" value="1"/>
</dbReference>
<dbReference type="PRINTS" id="PR00368">
    <property type="entry name" value="FADPNR"/>
</dbReference>
<dbReference type="PRINTS" id="PR00469">
    <property type="entry name" value="PNDRDTASEII"/>
</dbReference>
<dbReference type="SUPFAM" id="SSF51905">
    <property type="entry name" value="FAD/NAD(P)-binding domain"/>
    <property type="match status" value="1"/>
</dbReference>
<proteinExistence type="inferred from homology"/>
<comment type="catalytic activity">
    <reaction evidence="1">
        <text>2 reduced [2Fe-2S]-[ferredoxin] + NADP(+) + H(+) = 2 oxidized [2Fe-2S]-[ferredoxin] + NADPH</text>
        <dbReference type="Rhea" id="RHEA:20125"/>
        <dbReference type="Rhea" id="RHEA-COMP:10000"/>
        <dbReference type="Rhea" id="RHEA-COMP:10001"/>
        <dbReference type="ChEBI" id="CHEBI:15378"/>
        <dbReference type="ChEBI" id="CHEBI:33737"/>
        <dbReference type="ChEBI" id="CHEBI:33738"/>
        <dbReference type="ChEBI" id="CHEBI:57783"/>
        <dbReference type="ChEBI" id="CHEBI:58349"/>
        <dbReference type="EC" id="1.18.1.2"/>
    </reaction>
</comment>
<comment type="cofactor">
    <cofactor evidence="1">
        <name>FAD</name>
        <dbReference type="ChEBI" id="CHEBI:57692"/>
    </cofactor>
    <text evidence="1">Binds 1 FAD per subunit.</text>
</comment>
<comment type="subunit">
    <text evidence="1">Homodimer.</text>
</comment>
<comment type="similarity">
    <text evidence="1">Belongs to the ferredoxin--NADP reductase type 2 family.</text>
</comment>
<organism>
    <name type="scientific">Salinispora arenicola (strain CNS-205)</name>
    <dbReference type="NCBI Taxonomy" id="391037"/>
    <lineage>
        <taxon>Bacteria</taxon>
        <taxon>Bacillati</taxon>
        <taxon>Actinomycetota</taxon>
        <taxon>Actinomycetes</taxon>
        <taxon>Micromonosporales</taxon>
        <taxon>Micromonosporaceae</taxon>
        <taxon>Salinispora</taxon>
    </lineage>
</organism>
<gene>
    <name type="ordered locus">Sare_0817</name>
</gene>
<reference key="1">
    <citation type="submission" date="2007-10" db="EMBL/GenBank/DDBJ databases">
        <title>Complete sequence of Salinispora arenicola CNS-205.</title>
        <authorList>
            <consortium name="US DOE Joint Genome Institute"/>
            <person name="Copeland A."/>
            <person name="Lucas S."/>
            <person name="Lapidus A."/>
            <person name="Barry K."/>
            <person name="Glavina del Rio T."/>
            <person name="Dalin E."/>
            <person name="Tice H."/>
            <person name="Pitluck S."/>
            <person name="Foster B."/>
            <person name="Schmutz J."/>
            <person name="Larimer F."/>
            <person name="Land M."/>
            <person name="Hauser L."/>
            <person name="Kyrpides N."/>
            <person name="Ivanova N."/>
            <person name="Jensen P.R."/>
            <person name="Moore B.S."/>
            <person name="Penn K."/>
            <person name="Jenkins C."/>
            <person name="Udwary D."/>
            <person name="Xiang L."/>
            <person name="Gontang E."/>
            <person name="Richardson P."/>
        </authorList>
    </citation>
    <scope>NUCLEOTIDE SEQUENCE [LARGE SCALE GENOMIC DNA]</scope>
    <source>
        <strain>CNS-205</strain>
    </source>
</reference>
<name>FENR_SALAI</name>